<reference key="1">
    <citation type="submission" date="2005-03" db="EMBL/GenBank/DDBJ databases">
        <title>Brevibacillus brevis strain 47, complete genome.</title>
        <authorList>
            <person name="Hosoyama A."/>
            <person name="Yamada R."/>
            <person name="Hongo Y."/>
            <person name="Terui Y."/>
            <person name="Ankai A."/>
            <person name="Masuyama W."/>
            <person name="Sekiguchi M."/>
            <person name="Takeda T."/>
            <person name="Asano K."/>
            <person name="Ohji S."/>
            <person name="Ichikawa N."/>
            <person name="Narita S."/>
            <person name="Aoki N."/>
            <person name="Miura H."/>
            <person name="Matsushita S."/>
            <person name="Sekigawa T."/>
            <person name="Yamagata H."/>
            <person name="Yoshikawa H."/>
            <person name="Udaka S."/>
            <person name="Tanikawa S."/>
            <person name="Fujita N."/>
        </authorList>
    </citation>
    <scope>NUCLEOTIDE SEQUENCE [LARGE SCALE GENOMIC DNA]</scope>
    <source>
        <strain>47 / JCM 6285 / NBRC 100599</strain>
    </source>
</reference>
<feature type="chain" id="PRO_1000148684" description="Putative septation protein SpoVG">
    <location>
        <begin position="1"/>
        <end position="95"/>
    </location>
</feature>
<accession>C0ZHD2</accession>
<sequence>MEVTDVRLRRVNTDGRMKAIASITIDHEFVVHDIRVIDGNNGMFVAMPSKRTPDGEFRDIAHPISSTTREKIQAAVLTEYDRVGQEEESTIEAGA</sequence>
<evidence type="ECO:0000255" key="1">
    <source>
        <dbReference type="HAMAP-Rule" id="MF_00819"/>
    </source>
</evidence>
<protein>
    <recommendedName>
        <fullName evidence="1">Putative septation protein SpoVG</fullName>
    </recommendedName>
</protein>
<organism>
    <name type="scientific">Brevibacillus brevis (strain 47 / JCM 6285 / NBRC 100599)</name>
    <dbReference type="NCBI Taxonomy" id="358681"/>
    <lineage>
        <taxon>Bacteria</taxon>
        <taxon>Bacillati</taxon>
        <taxon>Bacillota</taxon>
        <taxon>Bacilli</taxon>
        <taxon>Bacillales</taxon>
        <taxon>Paenibacillaceae</taxon>
        <taxon>Brevibacillus</taxon>
    </lineage>
</organism>
<keyword id="KW-0131">Cell cycle</keyword>
<keyword id="KW-0132">Cell division</keyword>
<keyword id="KW-1185">Reference proteome</keyword>
<keyword id="KW-0717">Septation</keyword>
<gene>
    <name evidence="1" type="primary">spoVG</name>
    <name type="ordered locus">BBR47_00960</name>
</gene>
<dbReference type="EMBL" id="AP008955">
    <property type="protein sequence ID" value="BAH41073.1"/>
    <property type="molecule type" value="Genomic_DNA"/>
</dbReference>
<dbReference type="RefSeq" id="WP_007719936.1">
    <property type="nucleotide sequence ID" value="NC_012491.1"/>
</dbReference>
<dbReference type="SMR" id="C0ZHD2"/>
<dbReference type="STRING" id="358681.BBR47_00960"/>
<dbReference type="GeneID" id="95754223"/>
<dbReference type="KEGG" id="bbe:BBR47_00960"/>
<dbReference type="eggNOG" id="COG2088">
    <property type="taxonomic scope" value="Bacteria"/>
</dbReference>
<dbReference type="HOGENOM" id="CLU_103669_2_1_9"/>
<dbReference type="Proteomes" id="UP000001877">
    <property type="component" value="Chromosome"/>
</dbReference>
<dbReference type="GO" id="GO:0000917">
    <property type="term" value="P:division septum assembly"/>
    <property type="evidence" value="ECO:0007669"/>
    <property type="project" value="UniProtKB-KW"/>
</dbReference>
<dbReference type="GO" id="GO:0030435">
    <property type="term" value="P:sporulation resulting in formation of a cellular spore"/>
    <property type="evidence" value="ECO:0007669"/>
    <property type="project" value="InterPro"/>
</dbReference>
<dbReference type="FunFam" id="3.30.1120.40:FF:000001">
    <property type="entry name" value="Putative septation protein SpoVG"/>
    <property type="match status" value="1"/>
</dbReference>
<dbReference type="Gene3D" id="3.30.1120.40">
    <property type="entry name" value="Stage V sporulation protein G"/>
    <property type="match status" value="1"/>
</dbReference>
<dbReference type="HAMAP" id="MF_00819">
    <property type="entry name" value="SpoVG"/>
    <property type="match status" value="1"/>
</dbReference>
<dbReference type="InterPro" id="IPR007170">
    <property type="entry name" value="SpoVG"/>
</dbReference>
<dbReference type="InterPro" id="IPR036751">
    <property type="entry name" value="SpoVG_sf"/>
</dbReference>
<dbReference type="NCBIfam" id="NF009749">
    <property type="entry name" value="PRK13259.1"/>
    <property type="match status" value="1"/>
</dbReference>
<dbReference type="PANTHER" id="PTHR38429">
    <property type="entry name" value="SEPTATION PROTEIN SPOVG-RELATED"/>
    <property type="match status" value="1"/>
</dbReference>
<dbReference type="PANTHER" id="PTHR38429:SF1">
    <property type="entry name" value="SEPTATION PROTEIN SPOVG-RELATED"/>
    <property type="match status" value="1"/>
</dbReference>
<dbReference type="Pfam" id="PF04026">
    <property type="entry name" value="SpoVG"/>
    <property type="match status" value="1"/>
</dbReference>
<dbReference type="SUPFAM" id="SSF160537">
    <property type="entry name" value="SpoVG-like"/>
    <property type="match status" value="1"/>
</dbReference>
<proteinExistence type="inferred from homology"/>
<comment type="function">
    <text evidence="1">Could be involved in septation.</text>
</comment>
<comment type="similarity">
    <text evidence="1">Belongs to the SpoVG family.</text>
</comment>
<name>SP5G_BREBN</name>